<gene>
    <name evidence="1" type="primary">rpsF</name>
    <name evidence="1" type="synonym">rps6</name>
    <name type="ordered locus">Tery_3887</name>
</gene>
<organism>
    <name type="scientific">Trichodesmium erythraeum (strain IMS101)</name>
    <dbReference type="NCBI Taxonomy" id="203124"/>
    <lineage>
        <taxon>Bacteria</taxon>
        <taxon>Bacillati</taxon>
        <taxon>Cyanobacteriota</taxon>
        <taxon>Cyanophyceae</taxon>
        <taxon>Oscillatoriophycideae</taxon>
        <taxon>Oscillatoriales</taxon>
        <taxon>Microcoleaceae</taxon>
        <taxon>Trichodesmium</taxon>
    </lineage>
</organism>
<protein>
    <recommendedName>
        <fullName evidence="1">Small ribosomal subunit protein bS6</fullName>
    </recommendedName>
    <alternativeName>
        <fullName evidence="2">30S ribosomal protein S6</fullName>
    </alternativeName>
</protein>
<keyword id="KW-0687">Ribonucleoprotein</keyword>
<keyword id="KW-0689">Ribosomal protein</keyword>
<keyword id="KW-0694">RNA-binding</keyword>
<keyword id="KW-0699">rRNA-binding</keyword>
<sequence>MNKFIYETMYILRPDMTEEKVEQAITKYKSMLEEQGAYDIKIQHRGKLRLAYEINNQREGIYIQMNYQGPPTQIAILERAMRLSEEVIRYLTVKQELPKTPETDTQKNLEPAVALAE</sequence>
<dbReference type="EMBL" id="CP000393">
    <property type="protein sequence ID" value="ABG52924.1"/>
    <property type="molecule type" value="Genomic_DNA"/>
</dbReference>
<dbReference type="RefSeq" id="WP_011613254.1">
    <property type="nucleotide sequence ID" value="NC_008312.1"/>
</dbReference>
<dbReference type="SMR" id="Q10XV0"/>
<dbReference type="STRING" id="203124.Tery_3887"/>
<dbReference type="KEGG" id="ter:Tery_3887"/>
<dbReference type="eggNOG" id="COG0360">
    <property type="taxonomic scope" value="Bacteria"/>
</dbReference>
<dbReference type="HOGENOM" id="CLU_113441_4_2_3"/>
<dbReference type="OrthoDB" id="9812702at2"/>
<dbReference type="GO" id="GO:0005737">
    <property type="term" value="C:cytoplasm"/>
    <property type="evidence" value="ECO:0007669"/>
    <property type="project" value="UniProtKB-ARBA"/>
</dbReference>
<dbReference type="GO" id="GO:1990904">
    <property type="term" value="C:ribonucleoprotein complex"/>
    <property type="evidence" value="ECO:0007669"/>
    <property type="project" value="UniProtKB-KW"/>
</dbReference>
<dbReference type="GO" id="GO:0005840">
    <property type="term" value="C:ribosome"/>
    <property type="evidence" value="ECO:0007669"/>
    <property type="project" value="UniProtKB-KW"/>
</dbReference>
<dbReference type="GO" id="GO:0070181">
    <property type="term" value="F:small ribosomal subunit rRNA binding"/>
    <property type="evidence" value="ECO:0007669"/>
    <property type="project" value="TreeGrafter"/>
</dbReference>
<dbReference type="GO" id="GO:0003735">
    <property type="term" value="F:structural constituent of ribosome"/>
    <property type="evidence" value="ECO:0007669"/>
    <property type="project" value="InterPro"/>
</dbReference>
<dbReference type="GO" id="GO:0006412">
    <property type="term" value="P:translation"/>
    <property type="evidence" value="ECO:0007669"/>
    <property type="project" value="UniProtKB-UniRule"/>
</dbReference>
<dbReference type="CDD" id="cd15487">
    <property type="entry name" value="bS6_chloro_cyano"/>
    <property type="match status" value="1"/>
</dbReference>
<dbReference type="Gene3D" id="3.30.70.60">
    <property type="match status" value="1"/>
</dbReference>
<dbReference type="HAMAP" id="MF_00360">
    <property type="entry name" value="Ribosomal_bS6"/>
    <property type="match status" value="1"/>
</dbReference>
<dbReference type="InterPro" id="IPR000529">
    <property type="entry name" value="Ribosomal_bS6"/>
</dbReference>
<dbReference type="InterPro" id="IPR035980">
    <property type="entry name" value="Ribosomal_bS6_sf"/>
</dbReference>
<dbReference type="InterPro" id="IPR020814">
    <property type="entry name" value="Ribosomal_S6_plastid/chlpt"/>
</dbReference>
<dbReference type="InterPro" id="IPR014717">
    <property type="entry name" value="Transl_elong_EF1B/ribsomal_bS6"/>
</dbReference>
<dbReference type="NCBIfam" id="TIGR00166">
    <property type="entry name" value="S6"/>
    <property type="match status" value="1"/>
</dbReference>
<dbReference type="PANTHER" id="PTHR21011">
    <property type="entry name" value="MITOCHONDRIAL 28S RIBOSOMAL PROTEIN S6"/>
    <property type="match status" value="1"/>
</dbReference>
<dbReference type="PANTHER" id="PTHR21011:SF1">
    <property type="entry name" value="SMALL RIBOSOMAL SUBUNIT PROTEIN BS6M"/>
    <property type="match status" value="1"/>
</dbReference>
<dbReference type="Pfam" id="PF01250">
    <property type="entry name" value="Ribosomal_S6"/>
    <property type="match status" value="1"/>
</dbReference>
<dbReference type="SUPFAM" id="SSF54995">
    <property type="entry name" value="Ribosomal protein S6"/>
    <property type="match status" value="1"/>
</dbReference>
<accession>Q10XV0</accession>
<name>RS6_TRIEI</name>
<evidence type="ECO:0000255" key="1">
    <source>
        <dbReference type="HAMAP-Rule" id="MF_00360"/>
    </source>
</evidence>
<evidence type="ECO:0000305" key="2"/>
<feature type="chain" id="PRO_1000005380" description="Small ribosomal subunit protein bS6">
    <location>
        <begin position="1"/>
        <end position="117"/>
    </location>
</feature>
<proteinExistence type="inferred from homology"/>
<comment type="function">
    <text evidence="1">Binds together with bS18 to 16S ribosomal RNA.</text>
</comment>
<comment type="similarity">
    <text evidence="1">Belongs to the bacterial ribosomal protein bS6 family.</text>
</comment>
<reference key="1">
    <citation type="journal article" date="2015" name="Proc. Natl. Acad. Sci. U.S.A.">
        <title>Trichodesmium genome maintains abundant, widespread noncoding DNA in situ, despite oligotrophic lifestyle.</title>
        <authorList>
            <person name="Walworth N."/>
            <person name="Pfreundt U."/>
            <person name="Nelson W.C."/>
            <person name="Mincer T."/>
            <person name="Heidelberg J.F."/>
            <person name="Fu F."/>
            <person name="Waterbury J.B."/>
            <person name="Glavina del Rio T."/>
            <person name="Goodwin L."/>
            <person name="Kyrpides N.C."/>
            <person name="Land M.L."/>
            <person name="Woyke T."/>
            <person name="Hutchins D.A."/>
            <person name="Hess W.R."/>
            <person name="Webb E.A."/>
        </authorList>
    </citation>
    <scope>NUCLEOTIDE SEQUENCE [LARGE SCALE GENOMIC DNA]</scope>
    <source>
        <strain>IMS101</strain>
    </source>
</reference>